<keyword id="KW-1185">Reference proteome</keyword>
<keyword id="KW-0687">Ribonucleoprotein</keyword>
<keyword id="KW-0689">Ribosomal protein</keyword>
<protein>
    <recommendedName>
        <fullName evidence="1">Small ribosomal subunit protein eS17</fullName>
    </recommendedName>
    <alternativeName>
        <fullName evidence="2">30S ribosomal protein S17e</fullName>
    </alternativeName>
</protein>
<dbReference type="EMBL" id="AE004437">
    <property type="protein sequence ID" value="AAG19746.1"/>
    <property type="molecule type" value="Genomic_DNA"/>
</dbReference>
<dbReference type="PIR" id="F84297">
    <property type="entry name" value="F84297"/>
</dbReference>
<dbReference type="RefSeq" id="WP_010903043.1">
    <property type="nucleotide sequence ID" value="NC_002607.1"/>
</dbReference>
<dbReference type="SMR" id="Q9HPX1"/>
<dbReference type="FunCoup" id="Q9HPX1">
    <property type="interactions" value="53"/>
</dbReference>
<dbReference type="STRING" id="64091.VNG_1433G"/>
<dbReference type="PaxDb" id="64091-VNG_1433G"/>
<dbReference type="KEGG" id="hal:VNG_1433G"/>
<dbReference type="PATRIC" id="fig|64091.14.peg.1096"/>
<dbReference type="HOGENOM" id="CLU_176720_1_0_2"/>
<dbReference type="InParanoid" id="Q9HPX1"/>
<dbReference type="OrthoDB" id="52479at2157"/>
<dbReference type="PhylomeDB" id="Q9HPX1"/>
<dbReference type="Proteomes" id="UP000000554">
    <property type="component" value="Chromosome"/>
</dbReference>
<dbReference type="GO" id="GO:0005829">
    <property type="term" value="C:cytosol"/>
    <property type="evidence" value="ECO:0007669"/>
    <property type="project" value="UniProtKB-ARBA"/>
</dbReference>
<dbReference type="GO" id="GO:1990904">
    <property type="term" value="C:ribonucleoprotein complex"/>
    <property type="evidence" value="ECO:0007669"/>
    <property type="project" value="UniProtKB-KW"/>
</dbReference>
<dbReference type="GO" id="GO:0005840">
    <property type="term" value="C:ribosome"/>
    <property type="evidence" value="ECO:0007669"/>
    <property type="project" value="UniProtKB-KW"/>
</dbReference>
<dbReference type="GO" id="GO:0003735">
    <property type="term" value="F:structural constituent of ribosome"/>
    <property type="evidence" value="ECO:0007669"/>
    <property type="project" value="InterPro"/>
</dbReference>
<dbReference type="GO" id="GO:0006412">
    <property type="term" value="P:translation"/>
    <property type="evidence" value="ECO:0007669"/>
    <property type="project" value="UniProtKB-UniRule"/>
</dbReference>
<dbReference type="Gene3D" id="1.10.60.20">
    <property type="entry name" value="Ribosomal protein S17e-like"/>
    <property type="match status" value="1"/>
</dbReference>
<dbReference type="HAMAP" id="MF_00511">
    <property type="entry name" value="Ribosomal_eS17"/>
    <property type="match status" value="1"/>
</dbReference>
<dbReference type="InterPro" id="IPR001210">
    <property type="entry name" value="Ribosomal_eS17"/>
</dbReference>
<dbReference type="InterPro" id="IPR018273">
    <property type="entry name" value="Ribosomal_eS17_CS"/>
</dbReference>
<dbReference type="InterPro" id="IPR036401">
    <property type="entry name" value="Ribosomal_eS17_sf"/>
</dbReference>
<dbReference type="NCBIfam" id="NF002242">
    <property type="entry name" value="PRK01151.1"/>
    <property type="match status" value="1"/>
</dbReference>
<dbReference type="PANTHER" id="PTHR10732">
    <property type="entry name" value="40S RIBOSOMAL PROTEIN S17"/>
    <property type="match status" value="1"/>
</dbReference>
<dbReference type="PANTHER" id="PTHR10732:SF0">
    <property type="entry name" value="40S RIBOSOMAL PROTEIN S17"/>
    <property type="match status" value="1"/>
</dbReference>
<dbReference type="Pfam" id="PF00833">
    <property type="entry name" value="Ribosomal_S17e"/>
    <property type="match status" value="1"/>
</dbReference>
<dbReference type="SUPFAM" id="SSF116820">
    <property type="entry name" value="Rps17e-like"/>
    <property type="match status" value="1"/>
</dbReference>
<dbReference type="PROSITE" id="PS00712">
    <property type="entry name" value="RIBOSOMAL_S17E"/>
    <property type="match status" value="1"/>
</dbReference>
<reference key="1">
    <citation type="journal article" date="2000" name="Proc. Natl. Acad. Sci. U.S.A.">
        <title>Genome sequence of Halobacterium species NRC-1.</title>
        <authorList>
            <person name="Ng W.V."/>
            <person name="Kennedy S.P."/>
            <person name="Mahairas G.G."/>
            <person name="Berquist B."/>
            <person name="Pan M."/>
            <person name="Shukla H.D."/>
            <person name="Lasky S.R."/>
            <person name="Baliga N.S."/>
            <person name="Thorsson V."/>
            <person name="Sbrogna J."/>
            <person name="Swartzell S."/>
            <person name="Weir D."/>
            <person name="Hall J."/>
            <person name="Dahl T.A."/>
            <person name="Welti R."/>
            <person name="Goo Y.A."/>
            <person name="Leithauser B."/>
            <person name="Keller K."/>
            <person name="Cruz R."/>
            <person name="Danson M.J."/>
            <person name="Hough D.W."/>
            <person name="Maddocks D.G."/>
            <person name="Jablonski P.E."/>
            <person name="Krebs M.P."/>
            <person name="Angevine C.M."/>
            <person name="Dale H."/>
            <person name="Isenbarger T.A."/>
            <person name="Peck R.F."/>
            <person name="Pohlschroder M."/>
            <person name="Spudich J.L."/>
            <person name="Jung K.-H."/>
            <person name="Alam M."/>
            <person name="Freitas T."/>
            <person name="Hou S."/>
            <person name="Daniels C.J."/>
            <person name="Dennis P.P."/>
            <person name="Omer A.D."/>
            <person name="Ebhardt H."/>
            <person name="Lowe T.M."/>
            <person name="Liang P."/>
            <person name="Riley M."/>
            <person name="Hood L."/>
            <person name="DasSarma S."/>
        </authorList>
    </citation>
    <scope>NUCLEOTIDE SEQUENCE [LARGE SCALE GENOMIC DNA]</scope>
    <source>
        <strain>ATCC 700922 / JCM 11081 / NRC-1</strain>
    </source>
</reference>
<organism>
    <name type="scientific">Halobacterium salinarum (strain ATCC 700922 / JCM 11081 / NRC-1)</name>
    <name type="common">Halobacterium halobium</name>
    <dbReference type="NCBI Taxonomy" id="64091"/>
    <lineage>
        <taxon>Archaea</taxon>
        <taxon>Methanobacteriati</taxon>
        <taxon>Methanobacteriota</taxon>
        <taxon>Stenosarchaea group</taxon>
        <taxon>Halobacteria</taxon>
        <taxon>Halobacteriales</taxon>
        <taxon>Halobacteriaceae</taxon>
        <taxon>Halobacterium</taxon>
        <taxon>Halobacterium salinarum NRC-34001</taxon>
    </lineage>
</organism>
<name>RS17E_HALSA</name>
<accession>Q9HPX1</accession>
<proteinExistence type="inferred from homology"/>
<gene>
    <name evidence="1" type="primary">rps17e</name>
    <name type="ordered locus">VNG_1433G</name>
</gene>
<evidence type="ECO:0000255" key="1">
    <source>
        <dbReference type="HAMAP-Rule" id="MF_00511"/>
    </source>
</evidence>
<evidence type="ECO:0000305" key="2"/>
<feature type="chain" id="PRO_0000141551" description="Small ribosomal subunit protein eS17">
    <location>
        <begin position="1"/>
        <end position="59"/>
    </location>
</feature>
<comment type="similarity">
    <text evidence="1">Belongs to the eukaryotic ribosomal protein eS17 family.</text>
</comment>
<sequence length="59" mass="6971">MAIKPDYVKKTGNILMERYQDAFSREDFEHNKDAVTELTNIESKNVRNRIAGYITHKRN</sequence>